<dbReference type="EMBL" id="CP000792">
    <property type="protein sequence ID" value="EAT98106.1"/>
    <property type="molecule type" value="Genomic_DNA"/>
</dbReference>
<dbReference type="RefSeq" id="WP_002941606.1">
    <property type="nucleotide sequence ID" value="NC_009802.2"/>
</dbReference>
<dbReference type="SMR" id="A7ZFZ7"/>
<dbReference type="STRING" id="360104.CCC13826_1761"/>
<dbReference type="KEGG" id="cco:CCC13826_1761"/>
<dbReference type="eggNOG" id="COG0097">
    <property type="taxonomic scope" value="Bacteria"/>
</dbReference>
<dbReference type="HOGENOM" id="CLU_065464_1_2_7"/>
<dbReference type="OrthoDB" id="9805007at2"/>
<dbReference type="Proteomes" id="UP000001121">
    <property type="component" value="Chromosome"/>
</dbReference>
<dbReference type="GO" id="GO:0022625">
    <property type="term" value="C:cytosolic large ribosomal subunit"/>
    <property type="evidence" value="ECO:0007669"/>
    <property type="project" value="TreeGrafter"/>
</dbReference>
<dbReference type="GO" id="GO:0019843">
    <property type="term" value="F:rRNA binding"/>
    <property type="evidence" value="ECO:0007669"/>
    <property type="project" value="UniProtKB-UniRule"/>
</dbReference>
<dbReference type="GO" id="GO:0003735">
    <property type="term" value="F:structural constituent of ribosome"/>
    <property type="evidence" value="ECO:0007669"/>
    <property type="project" value="InterPro"/>
</dbReference>
<dbReference type="GO" id="GO:0002181">
    <property type="term" value="P:cytoplasmic translation"/>
    <property type="evidence" value="ECO:0007669"/>
    <property type="project" value="TreeGrafter"/>
</dbReference>
<dbReference type="FunFam" id="3.90.930.12:FF:000001">
    <property type="entry name" value="50S ribosomal protein L6"/>
    <property type="match status" value="1"/>
</dbReference>
<dbReference type="Gene3D" id="3.90.930.12">
    <property type="entry name" value="Ribosomal protein L6, alpha-beta domain"/>
    <property type="match status" value="2"/>
</dbReference>
<dbReference type="HAMAP" id="MF_01365_B">
    <property type="entry name" value="Ribosomal_uL6_B"/>
    <property type="match status" value="1"/>
</dbReference>
<dbReference type="InterPro" id="IPR000702">
    <property type="entry name" value="Ribosomal_uL6-like"/>
</dbReference>
<dbReference type="InterPro" id="IPR036789">
    <property type="entry name" value="Ribosomal_uL6-like_a/b-dom_sf"/>
</dbReference>
<dbReference type="InterPro" id="IPR020040">
    <property type="entry name" value="Ribosomal_uL6_a/b-dom"/>
</dbReference>
<dbReference type="InterPro" id="IPR019906">
    <property type="entry name" value="Ribosomal_uL6_bac-type"/>
</dbReference>
<dbReference type="InterPro" id="IPR002358">
    <property type="entry name" value="Ribosomal_uL6_CS"/>
</dbReference>
<dbReference type="NCBIfam" id="TIGR03654">
    <property type="entry name" value="L6_bact"/>
    <property type="match status" value="1"/>
</dbReference>
<dbReference type="PANTHER" id="PTHR11655">
    <property type="entry name" value="60S/50S RIBOSOMAL PROTEIN L6/L9"/>
    <property type="match status" value="1"/>
</dbReference>
<dbReference type="PANTHER" id="PTHR11655:SF14">
    <property type="entry name" value="LARGE RIBOSOMAL SUBUNIT PROTEIN UL6M"/>
    <property type="match status" value="1"/>
</dbReference>
<dbReference type="Pfam" id="PF00347">
    <property type="entry name" value="Ribosomal_L6"/>
    <property type="match status" value="2"/>
</dbReference>
<dbReference type="PIRSF" id="PIRSF002162">
    <property type="entry name" value="Ribosomal_L6"/>
    <property type="match status" value="1"/>
</dbReference>
<dbReference type="PRINTS" id="PR00059">
    <property type="entry name" value="RIBOSOMALL6"/>
</dbReference>
<dbReference type="SUPFAM" id="SSF56053">
    <property type="entry name" value="Ribosomal protein L6"/>
    <property type="match status" value="2"/>
</dbReference>
<dbReference type="PROSITE" id="PS00525">
    <property type="entry name" value="RIBOSOMAL_L6_1"/>
    <property type="match status" value="1"/>
</dbReference>
<name>RL6_CAMC1</name>
<protein>
    <recommendedName>
        <fullName evidence="1">Large ribosomal subunit protein uL6</fullName>
    </recommendedName>
    <alternativeName>
        <fullName evidence="2">50S ribosomal protein L6</fullName>
    </alternativeName>
</protein>
<reference key="1">
    <citation type="submission" date="2007-10" db="EMBL/GenBank/DDBJ databases">
        <title>Genome sequence of Campylobacter concisus 13826 isolated from human feces.</title>
        <authorList>
            <person name="Fouts D.E."/>
            <person name="Mongodin E.F."/>
            <person name="Puiu D."/>
            <person name="Sebastian Y."/>
            <person name="Miller W.G."/>
            <person name="Mandrell R.E."/>
            <person name="On S."/>
            <person name="Nelson K.E."/>
        </authorList>
    </citation>
    <scope>NUCLEOTIDE SEQUENCE [LARGE SCALE GENOMIC DNA]</scope>
    <source>
        <strain>13826</strain>
    </source>
</reference>
<feature type="chain" id="PRO_1000055211" description="Large ribosomal subunit protein uL6">
    <location>
        <begin position="1"/>
        <end position="178"/>
    </location>
</feature>
<comment type="function">
    <text evidence="1">This protein binds to the 23S rRNA, and is important in its secondary structure. It is located near the subunit interface in the base of the L7/L12 stalk, and near the tRNA binding site of the peptidyltransferase center.</text>
</comment>
<comment type="subunit">
    <text evidence="1">Part of the 50S ribosomal subunit.</text>
</comment>
<comment type="similarity">
    <text evidence="1">Belongs to the universal ribosomal protein uL6 family.</text>
</comment>
<proteinExistence type="inferred from homology"/>
<evidence type="ECO:0000255" key="1">
    <source>
        <dbReference type="HAMAP-Rule" id="MF_01365"/>
    </source>
</evidence>
<evidence type="ECO:0000305" key="2"/>
<accession>A7ZFZ7</accession>
<gene>
    <name evidence="1" type="primary">rplF</name>
    <name type="ordered locus">Ccon26_18700</name>
    <name type="ORF">CCC13826_1761</name>
</gene>
<keyword id="KW-0687">Ribonucleoprotein</keyword>
<keyword id="KW-0689">Ribosomal protein</keyword>
<keyword id="KW-0694">RNA-binding</keyword>
<keyword id="KW-0699">rRNA-binding</keyword>
<organism>
    <name type="scientific">Campylobacter concisus (strain 13826)</name>
    <dbReference type="NCBI Taxonomy" id="360104"/>
    <lineage>
        <taxon>Bacteria</taxon>
        <taxon>Pseudomonadati</taxon>
        <taxon>Campylobacterota</taxon>
        <taxon>Epsilonproteobacteria</taxon>
        <taxon>Campylobacterales</taxon>
        <taxon>Campylobacteraceae</taxon>
        <taxon>Campylobacter</taxon>
    </lineage>
</organism>
<sequence>MSRIGKQPIAIPSGVDVSVENNVLKFKKGNHLKELDTKGHVDVKIENGHIVFAPKGEDRQSRAYWGTYRALANNIVTGITHGFTRQLEINGVGYKAAAKGKILELSLGFSHLINYELPAGVEASVDKNVITIKGDDKQVVGQVAAQVRGFRPPEPYKGKGVKYLEERIIRKAGKTSKK</sequence>